<accession>Q5P2S7</accession>
<comment type="function">
    <text evidence="1">Involved in lipopolysaccharide (LPS) biosynthesis. Translocates lipid A-core from the inner to the outer leaflet of the inner membrane. Transmembrane domains (TMD) form a pore in the inner membrane and the ATP-binding domain (NBD) is responsible for energy generation.</text>
</comment>
<comment type="catalytic activity">
    <reaction evidence="1">
        <text>ATP + H2O + lipid A-core oligosaccharideSide 1 = ADP + phosphate + lipid A-core oligosaccharideSide 2.</text>
        <dbReference type="EC" id="7.5.2.6"/>
    </reaction>
</comment>
<comment type="subunit">
    <text evidence="1">Homodimer.</text>
</comment>
<comment type="subcellular location">
    <subcellularLocation>
        <location evidence="1">Cell inner membrane</location>
        <topology evidence="1">Multi-pass membrane protein</topology>
    </subcellularLocation>
</comment>
<comment type="domain">
    <text evidence="1">In MsbA the ATP-binding domain (NBD) and the transmembrane domain (TMD) are fused.</text>
</comment>
<comment type="similarity">
    <text evidence="1">Belongs to the ABC transporter superfamily. Lipid exporter (TC 3.A.1.106) family.</text>
</comment>
<keyword id="KW-0067">ATP-binding</keyword>
<keyword id="KW-0997">Cell inner membrane</keyword>
<keyword id="KW-1003">Cell membrane</keyword>
<keyword id="KW-0445">Lipid transport</keyword>
<keyword id="KW-0472">Membrane</keyword>
<keyword id="KW-0547">Nucleotide-binding</keyword>
<keyword id="KW-1185">Reference proteome</keyword>
<keyword id="KW-1278">Translocase</keyword>
<keyword id="KW-0812">Transmembrane</keyword>
<keyword id="KW-1133">Transmembrane helix</keyword>
<keyword id="KW-0813">Transport</keyword>
<dbReference type="EC" id="7.5.2.6" evidence="1"/>
<dbReference type="EMBL" id="CR555306">
    <property type="protein sequence ID" value="CAI08387.1"/>
    <property type="molecule type" value="Genomic_DNA"/>
</dbReference>
<dbReference type="RefSeq" id="WP_011238074.1">
    <property type="nucleotide sequence ID" value="NC_006513.1"/>
</dbReference>
<dbReference type="SMR" id="Q5P2S7"/>
<dbReference type="STRING" id="76114.ebA3992"/>
<dbReference type="KEGG" id="eba:ebA3992"/>
<dbReference type="eggNOG" id="COG1132">
    <property type="taxonomic scope" value="Bacteria"/>
</dbReference>
<dbReference type="HOGENOM" id="CLU_000604_84_3_4"/>
<dbReference type="OrthoDB" id="8554730at2"/>
<dbReference type="Proteomes" id="UP000006552">
    <property type="component" value="Chromosome"/>
</dbReference>
<dbReference type="GO" id="GO:0005886">
    <property type="term" value="C:plasma membrane"/>
    <property type="evidence" value="ECO:0007669"/>
    <property type="project" value="UniProtKB-SubCell"/>
</dbReference>
<dbReference type="GO" id="GO:0015421">
    <property type="term" value="F:ABC-type oligopeptide transporter activity"/>
    <property type="evidence" value="ECO:0007669"/>
    <property type="project" value="TreeGrafter"/>
</dbReference>
<dbReference type="GO" id="GO:0005524">
    <property type="term" value="F:ATP binding"/>
    <property type="evidence" value="ECO:0007669"/>
    <property type="project" value="UniProtKB-KW"/>
</dbReference>
<dbReference type="GO" id="GO:0016887">
    <property type="term" value="F:ATP hydrolysis activity"/>
    <property type="evidence" value="ECO:0007669"/>
    <property type="project" value="InterPro"/>
</dbReference>
<dbReference type="GO" id="GO:0034040">
    <property type="term" value="F:ATPase-coupled lipid transmembrane transporter activity"/>
    <property type="evidence" value="ECO:0007669"/>
    <property type="project" value="InterPro"/>
</dbReference>
<dbReference type="CDD" id="cd18552">
    <property type="entry name" value="ABC_6TM_MsbA_like"/>
    <property type="match status" value="1"/>
</dbReference>
<dbReference type="FunFam" id="3.40.50.300:FF:000140">
    <property type="entry name" value="Lipid A export ATP-binding/permease protein MsbA"/>
    <property type="match status" value="1"/>
</dbReference>
<dbReference type="Gene3D" id="1.20.1560.10">
    <property type="entry name" value="ABC transporter type 1, transmembrane domain"/>
    <property type="match status" value="1"/>
</dbReference>
<dbReference type="Gene3D" id="3.40.50.300">
    <property type="entry name" value="P-loop containing nucleotide triphosphate hydrolases"/>
    <property type="match status" value="1"/>
</dbReference>
<dbReference type="InterPro" id="IPR003593">
    <property type="entry name" value="AAA+_ATPase"/>
</dbReference>
<dbReference type="InterPro" id="IPR011527">
    <property type="entry name" value="ABC1_TM_dom"/>
</dbReference>
<dbReference type="InterPro" id="IPR036640">
    <property type="entry name" value="ABC1_TM_sf"/>
</dbReference>
<dbReference type="InterPro" id="IPR003439">
    <property type="entry name" value="ABC_transporter-like_ATP-bd"/>
</dbReference>
<dbReference type="InterPro" id="IPR017871">
    <property type="entry name" value="ABC_transporter-like_CS"/>
</dbReference>
<dbReference type="InterPro" id="IPR011917">
    <property type="entry name" value="ABC_transpr_lipidA"/>
</dbReference>
<dbReference type="InterPro" id="IPR027417">
    <property type="entry name" value="P-loop_NTPase"/>
</dbReference>
<dbReference type="InterPro" id="IPR039421">
    <property type="entry name" value="Type_1_exporter"/>
</dbReference>
<dbReference type="NCBIfam" id="TIGR02203">
    <property type="entry name" value="MsbA_lipidA"/>
    <property type="match status" value="1"/>
</dbReference>
<dbReference type="PANTHER" id="PTHR43394:SF1">
    <property type="entry name" value="ATP-BINDING CASSETTE SUB-FAMILY B MEMBER 10, MITOCHONDRIAL"/>
    <property type="match status" value="1"/>
</dbReference>
<dbReference type="PANTHER" id="PTHR43394">
    <property type="entry name" value="ATP-DEPENDENT PERMEASE MDL1, MITOCHONDRIAL"/>
    <property type="match status" value="1"/>
</dbReference>
<dbReference type="Pfam" id="PF00664">
    <property type="entry name" value="ABC_membrane"/>
    <property type="match status" value="1"/>
</dbReference>
<dbReference type="Pfam" id="PF00005">
    <property type="entry name" value="ABC_tran"/>
    <property type="match status" value="1"/>
</dbReference>
<dbReference type="SMART" id="SM00382">
    <property type="entry name" value="AAA"/>
    <property type="match status" value="1"/>
</dbReference>
<dbReference type="SUPFAM" id="SSF90123">
    <property type="entry name" value="ABC transporter transmembrane region"/>
    <property type="match status" value="1"/>
</dbReference>
<dbReference type="SUPFAM" id="SSF52540">
    <property type="entry name" value="P-loop containing nucleoside triphosphate hydrolases"/>
    <property type="match status" value="1"/>
</dbReference>
<dbReference type="PROSITE" id="PS50929">
    <property type="entry name" value="ABC_TM1F"/>
    <property type="match status" value="1"/>
</dbReference>
<dbReference type="PROSITE" id="PS00211">
    <property type="entry name" value="ABC_TRANSPORTER_1"/>
    <property type="match status" value="1"/>
</dbReference>
<dbReference type="PROSITE" id="PS50893">
    <property type="entry name" value="ABC_TRANSPORTER_2"/>
    <property type="match status" value="1"/>
</dbReference>
<dbReference type="PROSITE" id="PS51239">
    <property type="entry name" value="MSBA"/>
    <property type="match status" value="1"/>
</dbReference>
<feature type="chain" id="PRO_0000271613" description="ATP-dependent lipid A-core flippase">
    <location>
        <begin position="1"/>
        <end position="601"/>
    </location>
</feature>
<feature type="transmembrane region" description="Helical" evidence="1">
    <location>
        <begin position="26"/>
        <end position="46"/>
    </location>
</feature>
<feature type="transmembrane region" description="Helical" evidence="1">
    <location>
        <begin position="82"/>
        <end position="102"/>
    </location>
</feature>
<feature type="transmembrane region" description="Helical" evidence="1">
    <location>
        <begin position="167"/>
        <end position="187"/>
    </location>
</feature>
<feature type="transmembrane region" description="Helical" evidence="1">
    <location>
        <begin position="263"/>
        <end position="283"/>
    </location>
</feature>
<feature type="domain" description="ABC transmembrane type-1" evidence="1">
    <location>
        <begin position="30"/>
        <end position="321"/>
    </location>
</feature>
<feature type="domain" description="ABC transporter" evidence="1">
    <location>
        <begin position="353"/>
        <end position="589"/>
    </location>
</feature>
<feature type="binding site" evidence="1">
    <location>
        <begin position="387"/>
        <end position="394"/>
    </location>
    <ligand>
        <name>ATP</name>
        <dbReference type="ChEBI" id="CHEBI:30616"/>
    </ligand>
</feature>
<organism>
    <name type="scientific">Aromatoleum aromaticum (strain DSM 19018 / LMG 30748 / EbN1)</name>
    <name type="common">Azoarcus sp. (strain EbN1)</name>
    <dbReference type="NCBI Taxonomy" id="76114"/>
    <lineage>
        <taxon>Bacteria</taxon>
        <taxon>Pseudomonadati</taxon>
        <taxon>Pseudomonadota</taxon>
        <taxon>Betaproteobacteria</taxon>
        <taxon>Rhodocyclales</taxon>
        <taxon>Rhodocyclaceae</taxon>
        <taxon>Aromatoleum</taxon>
    </lineage>
</organism>
<name>MSBA_AROAE</name>
<gene>
    <name evidence="1" type="primary">msbA</name>
    <name type="ordered locus">AZOSEA22620</name>
    <name type="ORF">ebA3992</name>
</gene>
<reference key="1">
    <citation type="journal article" date="2005" name="Arch. Microbiol.">
        <title>The genome sequence of an anaerobic aromatic-degrading denitrifying bacterium, strain EbN1.</title>
        <authorList>
            <person name="Rabus R."/>
            <person name="Kube M."/>
            <person name="Heider J."/>
            <person name="Beck A."/>
            <person name="Heitmann K."/>
            <person name="Widdel F."/>
            <person name="Reinhardt R."/>
        </authorList>
    </citation>
    <scope>NUCLEOTIDE SEQUENCE [LARGE SCALE GENOMIC DNA]</scope>
    <source>
        <strain>DSM 19018 / LMG 30748 / EbN1</strain>
    </source>
</reference>
<evidence type="ECO:0000255" key="1">
    <source>
        <dbReference type="HAMAP-Rule" id="MF_01703"/>
    </source>
</evidence>
<protein>
    <recommendedName>
        <fullName evidence="1">ATP-dependent lipid A-core flippase</fullName>
        <ecNumber evidence="1">7.5.2.6</ecNumber>
    </recommendedName>
    <alternativeName>
        <fullName evidence="1">Lipid A export ATP-binding/permease protein MsbA</fullName>
    </alternativeName>
</protein>
<proteinExistence type="inferred from homology"/>
<sequence>MHRSDAAPASSIRIYFRLLSYVRPYVGLFAVSILGYVIFASSQPMLAGVLKYFVDGLTHPDAALVTGVPLLDGMELMHGVPLMIVLIAAWQGLGGYLGNYFLARVSLGLVHDLRQTLFDSLLRLPNTYFDQHSSGHLISRITFNVTMVTGAATDAIKIVIREGLTVVFLFAYLLWMNWRLTLVMVAILPLISLMVRNASGKFRKQSRKIQVAMGDVTHVASETIQGYRVVRSFGGEHYERERFRAASEDNTRKQLKMVKTSAVYTPTLQLVTYSAMAVVLFLVLRLRGEASVGDLVAYITAAGLLPKPIRQLSEVSSTIQRGVAGAESIFEQLDDKPEVDHGRIERERVSGRIEVRDLSFRYPGSDREVLDSVSFTVEPGQMIALVGRSGSGKSTLANLIPRFYHHDRGQILIDGVDVEDYTLKNLRRHIALVTQQVTLFNDTVANNIAYGDLAGLPRAAVEAAAEAGYAKEFIDRLPQGFDTLIGENGVTLSGGQRQRLAIARALLKNAPILILDEATSALDTESERHIQAALHRVMQARTTLVIAHRLSTIEQADVIMVMDHGRIVERGSHAELLAAGGHYARLHAMQFREEPAVAEGR</sequence>